<dbReference type="EC" id="2.1.1.10"/>
<dbReference type="EMBL" id="AF219223">
    <property type="protein sequence ID" value="AAF23822.1"/>
    <property type="molecule type" value="Genomic_DNA"/>
</dbReference>
<dbReference type="EMBL" id="AL138648">
    <property type="protein sequence ID" value="CAB86426.1"/>
    <property type="molecule type" value="Genomic_DNA"/>
</dbReference>
<dbReference type="EMBL" id="CP002686">
    <property type="protein sequence ID" value="AEE80456.1"/>
    <property type="molecule type" value="Genomic_DNA"/>
</dbReference>
<dbReference type="EMBL" id="CP002686">
    <property type="protein sequence ID" value="ANM63398.1"/>
    <property type="molecule type" value="Genomic_DNA"/>
</dbReference>
<dbReference type="EMBL" id="AF428402">
    <property type="protein sequence ID" value="AAL16170.1"/>
    <property type="molecule type" value="mRNA"/>
</dbReference>
<dbReference type="EMBL" id="BT010165">
    <property type="protein sequence ID" value="AAQ22634.1"/>
    <property type="molecule type" value="mRNA"/>
</dbReference>
<dbReference type="EMBL" id="AK227627">
    <property type="protein sequence ID" value="BAE99618.1"/>
    <property type="molecule type" value="mRNA"/>
</dbReference>
<dbReference type="PIR" id="T48114">
    <property type="entry name" value="T48114"/>
</dbReference>
<dbReference type="PIR" id="T51939">
    <property type="entry name" value="T51939"/>
</dbReference>
<dbReference type="RefSeq" id="NP_001319825.1">
    <molecule id="Q9M1W4-1"/>
    <property type="nucleotide sequence ID" value="NM_001340195.1"/>
</dbReference>
<dbReference type="RefSeq" id="NP_191884.1">
    <molecule id="Q9M1W4-1"/>
    <property type="nucleotide sequence ID" value="NM_116190.5"/>
</dbReference>
<dbReference type="SMR" id="Q9M1W4"/>
<dbReference type="FunCoup" id="Q9M1W4">
    <property type="interactions" value="1337"/>
</dbReference>
<dbReference type="STRING" id="3702.Q9M1W4"/>
<dbReference type="PaxDb" id="3702-AT3G63250.1"/>
<dbReference type="ProteomicsDB" id="228807">
    <molecule id="Q9M1W4-1"/>
</dbReference>
<dbReference type="DNASU" id="825500"/>
<dbReference type="EnsemblPlants" id="AT3G63250.1">
    <molecule id="Q9M1W4-1"/>
    <property type="protein sequence ID" value="AT3G63250.1"/>
    <property type="gene ID" value="AT3G63250"/>
</dbReference>
<dbReference type="EnsemblPlants" id="AT3G63250.3">
    <molecule id="Q9M1W4-1"/>
    <property type="protein sequence ID" value="AT3G63250.3"/>
    <property type="gene ID" value="AT3G63250"/>
</dbReference>
<dbReference type="GeneID" id="825500"/>
<dbReference type="Gramene" id="AT3G63250.1">
    <molecule id="Q9M1W4-1"/>
    <property type="protein sequence ID" value="AT3G63250.1"/>
    <property type="gene ID" value="AT3G63250"/>
</dbReference>
<dbReference type="Gramene" id="AT3G63250.3">
    <molecule id="Q9M1W4-1"/>
    <property type="protein sequence ID" value="AT3G63250.3"/>
    <property type="gene ID" value="AT3G63250"/>
</dbReference>
<dbReference type="KEGG" id="ath:AT3G63250"/>
<dbReference type="Araport" id="AT3G63250"/>
<dbReference type="TAIR" id="AT3G63250">
    <property type="gene designation" value="HMT2"/>
</dbReference>
<dbReference type="eggNOG" id="KOG1579">
    <property type="taxonomic scope" value="Eukaryota"/>
</dbReference>
<dbReference type="HOGENOM" id="CLU_004914_3_2_1"/>
<dbReference type="InParanoid" id="Q9M1W4"/>
<dbReference type="OMA" id="CSQPEVI"/>
<dbReference type="PhylomeDB" id="Q9M1W4"/>
<dbReference type="BioCyc" id="ARA:AT3G63250-MONOMER"/>
<dbReference type="BioCyc" id="MetaCyc:AT3G63250-MONOMER"/>
<dbReference type="BRENDA" id="2.1.1.10">
    <property type="organism ID" value="399"/>
</dbReference>
<dbReference type="SABIO-RK" id="Q9M1W4"/>
<dbReference type="CD-CODE" id="4299E36E">
    <property type="entry name" value="Nucleolus"/>
</dbReference>
<dbReference type="PRO" id="PR:Q9M1W4"/>
<dbReference type="Proteomes" id="UP000006548">
    <property type="component" value="Chromosome 3"/>
</dbReference>
<dbReference type="ExpressionAtlas" id="Q9M1W4">
    <property type="expression patterns" value="baseline and differential"/>
</dbReference>
<dbReference type="GO" id="GO:0005829">
    <property type="term" value="C:cytosol"/>
    <property type="evidence" value="ECO:0007005"/>
    <property type="project" value="TAIR"/>
</dbReference>
<dbReference type="GO" id="GO:0008898">
    <property type="term" value="F:S-adenosylmethionine-homocysteine S-methyltransferase activity"/>
    <property type="evidence" value="ECO:0000314"/>
    <property type="project" value="TAIR"/>
</dbReference>
<dbReference type="GO" id="GO:0061627">
    <property type="term" value="F:S-methylmethionine-homocysteine S-methyltransferase activity"/>
    <property type="evidence" value="ECO:0007669"/>
    <property type="project" value="RHEA"/>
</dbReference>
<dbReference type="GO" id="GO:0008270">
    <property type="term" value="F:zinc ion binding"/>
    <property type="evidence" value="ECO:0007669"/>
    <property type="project" value="InterPro"/>
</dbReference>
<dbReference type="GO" id="GO:0009086">
    <property type="term" value="P:methionine biosynthetic process"/>
    <property type="evidence" value="ECO:0000314"/>
    <property type="project" value="TAIR"/>
</dbReference>
<dbReference type="GO" id="GO:0032259">
    <property type="term" value="P:methylation"/>
    <property type="evidence" value="ECO:0007669"/>
    <property type="project" value="UniProtKB-KW"/>
</dbReference>
<dbReference type="GO" id="GO:0033528">
    <property type="term" value="P:S-methylmethionine cycle"/>
    <property type="evidence" value="ECO:0000315"/>
    <property type="project" value="TAIR"/>
</dbReference>
<dbReference type="FunFam" id="3.20.20.330:FF:000002">
    <property type="entry name" value="Homocysteine S-methyltransferase"/>
    <property type="match status" value="1"/>
</dbReference>
<dbReference type="Gene3D" id="3.20.20.330">
    <property type="entry name" value="Homocysteine-binding-like domain"/>
    <property type="match status" value="1"/>
</dbReference>
<dbReference type="InterPro" id="IPR017226">
    <property type="entry name" value="Betaine-hCys_S-MeTrfase_BHMT"/>
</dbReference>
<dbReference type="InterPro" id="IPR003726">
    <property type="entry name" value="HCY_dom"/>
</dbReference>
<dbReference type="InterPro" id="IPR036589">
    <property type="entry name" value="HCY_dom_sf"/>
</dbReference>
<dbReference type="InterPro" id="IPR051486">
    <property type="entry name" value="Hcy_S-methyltransferase"/>
</dbReference>
<dbReference type="NCBIfam" id="NF007020">
    <property type="entry name" value="PRK09485.1"/>
    <property type="match status" value="1"/>
</dbReference>
<dbReference type="PANTHER" id="PTHR46015:SF1">
    <property type="entry name" value="HOMOCYSTEINE S-METHYLTRANSFERASE-LIKE ISOFORM 1"/>
    <property type="match status" value="1"/>
</dbReference>
<dbReference type="PANTHER" id="PTHR46015">
    <property type="entry name" value="ZGC:172121"/>
    <property type="match status" value="1"/>
</dbReference>
<dbReference type="Pfam" id="PF02574">
    <property type="entry name" value="S-methyl_trans"/>
    <property type="match status" value="1"/>
</dbReference>
<dbReference type="PIRSF" id="PIRSF037505">
    <property type="entry name" value="Betaine_HMT"/>
    <property type="match status" value="1"/>
</dbReference>
<dbReference type="SUPFAM" id="SSF82282">
    <property type="entry name" value="Homocysteine S-methyltransferase"/>
    <property type="match status" value="1"/>
</dbReference>
<dbReference type="PROSITE" id="PS50970">
    <property type="entry name" value="HCY"/>
    <property type="match status" value="1"/>
</dbReference>
<comment type="function">
    <text>Catalyzes methyl transfer from S-methylmethionine (SMM) to adenosyl-L-homocysteine (AdoMet). SMM degradation (by HMT-1, HMT-2 and HMT-3) and biosynthesis (by MMT1) constitute the SMM cycle in plants, which is probably required to achieve short term control of AdoMet level.</text>
</comment>
<comment type="catalytic activity">
    <reaction evidence="2">
        <text>S-methyl-L-methionine + L-homocysteine = 2 L-methionine + H(+)</text>
        <dbReference type="Rhea" id="RHEA:26337"/>
        <dbReference type="ChEBI" id="CHEBI:15378"/>
        <dbReference type="ChEBI" id="CHEBI:57844"/>
        <dbReference type="ChEBI" id="CHEBI:58199"/>
        <dbReference type="ChEBI" id="CHEBI:58252"/>
        <dbReference type="EC" id="2.1.1.10"/>
    </reaction>
</comment>
<comment type="cofactor">
    <cofactor evidence="1">
        <name>Zn(2+)</name>
        <dbReference type="ChEBI" id="CHEBI:29105"/>
    </cofactor>
</comment>
<comment type="biophysicochemical properties">
    <kinetics>
        <KM evidence="3">50 uM for S-methylmethionine</KM>
        <KM evidence="3">225 uM for (S,S)-AdoMet</KM>
    </kinetics>
</comment>
<comment type="subunit">
    <text evidence="2">Monomer.</text>
</comment>
<comment type="alternative products">
    <event type="alternative splicing"/>
    <isoform>
        <id>Q9M1W4-1</id>
        <name>1</name>
        <sequence type="displayed"/>
    </isoform>
    <text>A number of isoforms are produced. According to EST sequences.</text>
</comment>
<comment type="tissue specificity">
    <text evidence="3">Expressed predominantly in roots. Expressed in rosette leaves, cauline leaves and developing seeds.</text>
</comment>
<comment type="miscellaneous">
    <text>In contrast to HMT-1, it is not inhibited by methionine.</text>
</comment>
<evidence type="ECO:0000255" key="1">
    <source>
        <dbReference type="PROSITE-ProRule" id="PRU00333"/>
    </source>
</evidence>
<evidence type="ECO:0000269" key="2">
    <source>
    </source>
</evidence>
<evidence type="ECO:0000269" key="3">
    <source>
    </source>
</evidence>
<evidence type="ECO:0000305" key="4"/>
<protein>
    <recommendedName>
        <fullName>Homocysteine S-methyltransferase 2</fullName>
        <ecNumber>2.1.1.10</ecNumber>
    </recommendedName>
    <alternativeName>
        <fullName>S-methylmethionine:homocysteine methyltransferase 2</fullName>
        <shortName>AtHMT-2</shortName>
        <shortName>SMM:Hcy S-methyltransferase 2</shortName>
    </alternativeName>
</protein>
<feature type="chain" id="PRO_0000114612" description="Homocysteine S-methyltransferase 2">
    <location>
        <begin position="1"/>
        <end position="333"/>
    </location>
</feature>
<feature type="domain" description="Hcy-binding" evidence="1">
    <location>
        <begin position="8"/>
        <end position="327"/>
    </location>
</feature>
<feature type="binding site" evidence="1">
    <location>
        <position position="245"/>
    </location>
    <ligand>
        <name>Zn(2+)</name>
        <dbReference type="ChEBI" id="CHEBI:29105"/>
    </ligand>
</feature>
<feature type="binding site" evidence="1">
    <location>
        <position position="312"/>
    </location>
    <ligand>
        <name>Zn(2+)</name>
        <dbReference type="ChEBI" id="CHEBI:29105"/>
    </ligand>
</feature>
<feature type="binding site" evidence="1">
    <location>
        <position position="313"/>
    </location>
    <ligand>
        <name>Zn(2+)</name>
        <dbReference type="ChEBI" id="CHEBI:29105"/>
    </ligand>
</feature>
<feature type="sequence conflict" description="In Ref. 1; AAF23822." evidence="4" ref="1">
    <original>T</original>
    <variation>C</variation>
    <location>
        <position position="103"/>
    </location>
</feature>
<name>HMT2_ARATH</name>
<proteinExistence type="evidence at protein level"/>
<gene>
    <name type="primary">HMT-2</name>
    <name type="ordered locus">At3g63250</name>
    <name type="ORF">F16M2.100</name>
</gene>
<organism>
    <name type="scientific">Arabidopsis thaliana</name>
    <name type="common">Mouse-ear cress</name>
    <dbReference type="NCBI Taxonomy" id="3702"/>
    <lineage>
        <taxon>Eukaryota</taxon>
        <taxon>Viridiplantae</taxon>
        <taxon>Streptophyta</taxon>
        <taxon>Embryophyta</taxon>
        <taxon>Tracheophyta</taxon>
        <taxon>Spermatophyta</taxon>
        <taxon>Magnoliopsida</taxon>
        <taxon>eudicotyledons</taxon>
        <taxon>Gunneridae</taxon>
        <taxon>Pentapetalae</taxon>
        <taxon>rosids</taxon>
        <taxon>malvids</taxon>
        <taxon>Brassicales</taxon>
        <taxon>Brassicaceae</taxon>
        <taxon>Camelineae</taxon>
        <taxon>Arabidopsis</taxon>
    </lineage>
</organism>
<reference key="1">
    <citation type="journal article" date="2000" name="J. Biol. Chem.">
        <title>Characterization and functional expression of cDNAs encoding methionine-sensitive and -insensitive homocysteine S-methyltransferases from Arabidopsis.</title>
        <authorList>
            <person name="Ranocha P."/>
            <person name="Bourgis F."/>
            <person name="Ziemak M.J."/>
            <person name="Rhodes D."/>
            <person name="Gage D.A."/>
            <person name="Hanson A.D."/>
        </authorList>
    </citation>
    <scope>NUCLEOTIDE SEQUENCE [GENOMIC DNA]</scope>
    <scope>ENZYME ACTIVITY</scope>
    <scope>SUBUNIT</scope>
</reference>
<reference key="2">
    <citation type="journal article" date="2000" name="Nature">
        <title>Sequence and analysis of chromosome 3 of the plant Arabidopsis thaliana.</title>
        <authorList>
            <person name="Salanoubat M."/>
            <person name="Lemcke K."/>
            <person name="Rieger M."/>
            <person name="Ansorge W."/>
            <person name="Unseld M."/>
            <person name="Fartmann B."/>
            <person name="Valle G."/>
            <person name="Bloecker H."/>
            <person name="Perez-Alonso M."/>
            <person name="Obermaier B."/>
            <person name="Delseny M."/>
            <person name="Boutry M."/>
            <person name="Grivell L.A."/>
            <person name="Mache R."/>
            <person name="Puigdomenech P."/>
            <person name="De Simone V."/>
            <person name="Choisne N."/>
            <person name="Artiguenave F."/>
            <person name="Robert C."/>
            <person name="Brottier P."/>
            <person name="Wincker P."/>
            <person name="Cattolico L."/>
            <person name="Weissenbach J."/>
            <person name="Saurin W."/>
            <person name="Quetier F."/>
            <person name="Schaefer M."/>
            <person name="Mueller-Auer S."/>
            <person name="Gabel C."/>
            <person name="Fuchs M."/>
            <person name="Benes V."/>
            <person name="Wurmbach E."/>
            <person name="Drzonek H."/>
            <person name="Erfle H."/>
            <person name="Jordan N."/>
            <person name="Bangert S."/>
            <person name="Wiedelmann R."/>
            <person name="Kranz H."/>
            <person name="Voss H."/>
            <person name="Holland R."/>
            <person name="Brandt P."/>
            <person name="Nyakatura G."/>
            <person name="Vezzi A."/>
            <person name="D'Angelo M."/>
            <person name="Pallavicini A."/>
            <person name="Toppo S."/>
            <person name="Simionati B."/>
            <person name="Conrad A."/>
            <person name="Hornischer K."/>
            <person name="Kauer G."/>
            <person name="Loehnert T.-H."/>
            <person name="Nordsiek G."/>
            <person name="Reichelt J."/>
            <person name="Scharfe M."/>
            <person name="Schoen O."/>
            <person name="Bargues M."/>
            <person name="Terol J."/>
            <person name="Climent J."/>
            <person name="Navarro P."/>
            <person name="Collado C."/>
            <person name="Perez-Perez A."/>
            <person name="Ottenwaelder B."/>
            <person name="Duchemin D."/>
            <person name="Cooke R."/>
            <person name="Laudie M."/>
            <person name="Berger-Llauro C."/>
            <person name="Purnelle B."/>
            <person name="Masuy D."/>
            <person name="de Haan M."/>
            <person name="Maarse A.C."/>
            <person name="Alcaraz J.-P."/>
            <person name="Cottet A."/>
            <person name="Casacuberta E."/>
            <person name="Monfort A."/>
            <person name="Argiriou A."/>
            <person name="Flores M."/>
            <person name="Liguori R."/>
            <person name="Vitale D."/>
            <person name="Mannhaupt G."/>
            <person name="Haase D."/>
            <person name="Schoof H."/>
            <person name="Rudd S."/>
            <person name="Zaccaria P."/>
            <person name="Mewes H.-W."/>
            <person name="Mayer K.F.X."/>
            <person name="Kaul S."/>
            <person name="Town C.D."/>
            <person name="Koo H.L."/>
            <person name="Tallon L.J."/>
            <person name="Jenkins J."/>
            <person name="Rooney T."/>
            <person name="Rizzo M."/>
            <person name="Walts A."/>
            <person name="Utterback T."/>
            <person name="Fujii C.Y."/>
            <person name="Shea T.P."/>
            <person name="Creasy T.H."/>
            <person name="Haas B."/>
            <person name="Maiti R."/>
            <person name="Wu D."/>
            <person name="Peterson J."/>
            <person name="Van Aken S."/>
            <person name="Pai G."/>
            <person name="Militscher J."/>
            <person name="Sellers P."/>
            <person name="Gill J.E."/>
            <person name="Feldblyum T.V."/>
            <person name="Preuss D."/>
            <person name="Lin X."/>
            <person name="Nierman W.C."/>
            <person name="Salzberg S.L."/>
            <person name="White O."/>
            <person name="Venter J.C."/>
            <person name="Fraser C.M."/>
            <person name="Kaneko T."/>
            <person name="Nakamura Y."/>
            <person name="Sato S."/>
            <person name="Kato T."/>
            <person name="Asamizu E."/>
            <person name="Sasamoto S."/>
            <person name="Kimura T."/>
            <person name="Idesawa K."/>
            <person name="Kawashima K."/>
            <person name="Kishida Y."/>
            <person name="Kiyokawa C."/>
            <person name="Kohara M."/>
            <person name="Matsumoto M."/>
            <person name="Matsuno A."/>
            <person name="Muraki A."/>
            <person name="Nakayama S."/>
            <person name="Nakazaki N."/>
            <person name="Shinpo S."/>
            <person name="Takeuchi C."/>
            <person name="Wada T."/>
            <person name="Watanabe A."/>
            <person name="Yamada M."/>
            <person name="Yasuda M."/>
            <person name="Tabata S."/>
        </authorList>
    </citation>
    <scope>NUCLEOTIDE SEQUENCE [LARGE SCALE GENOMIC DNA]</scope>
    <source>
        <strain>cv. Columbia</strain>
    </source>
</reference>
<reference key="3">
    <citation type="journal article" date="2017" name="Plant J.">
        <title>Araport11: a complete reannotation of the Arabidopsis thaliana reference genome.</title>
        <authorList>
            <person name="Cheng C.Y."/>
            <person name="Krishnakumar V."/>
            <person name="Chan A.P."/>
            <person name="Thibaud-Nissen F."/>
            <person name="Schobel S."/>
            <person name="Town C.D."/>
        </authorList>
    </citation>
    <scope>GENOME REANNOTATION</scope>
    <source>
        <strain>cv. Columbia</strain>
    </source>
</reference>
<reference key="4">
    <citation type="journal article" date="2003" name="Science">
        <title>Empirical analysis of transcriptional activity in the Arabidopsis genome.</title>
        <authorList>
            <person name="Yamada K."/>
            <person name="Lim J."/>
            <person name="Dale J.M."/>
            <person name="Chen H."/>
            <person name="Shinn P."/>
            <person name="Palm C.J."/>
            <person name="Southwick A.M."/>
            <person name="Wu H.C."/>
            <person name="Kim C.J."/>
            <person name="Nguyen M."/>
            <person name="Pham P.K."/>
            <person name="Cheuk R.F."/>
            <person name="Karlin-Newmann G."/>
            <person name="Liu S.X."/>
            <person name="Lam B."/>
            <person name="Sakano H."/>
            <person name="Wu T."/>
            <person name="Yu G."/>
            <person name="Miranda M."/>
            <person name="Quach H.L."/>
            <person name="Tripp M."/>
            <person name="Chang C.H."/>
            <person name="Lee J.M."/>
            <person name="Toriumi M.J."/>
            <person name="Chan M.M."/>
            <person name="Tang C.C."/>
            <person name="Onodera C.S."/>
            <person name="Deng J.M."/>
            <person name="Akiyama K."/>
            <person name="Ansari Y."/>
            <person name="Arakawa T."/>
            <person name="Banh J."/>
            <person name="Banno F."/>
            <person name="Bowser L."/>
            <person name="Brooks S.Y."/>
            <person name="Carninci P."/>
            <person name="Chao Q."/>
            <person name="Choy N."/>
            <person name="Enju A."/>
            <person name="Goldsmith A.D."/>
            <person name="Gurjal M."/>
            <person name="Hansen N.F."/>
            <person name="Hayashizaki Y."/>
            <person name="Johnson-Hopson C."/>
            <person name="Hsuan V.W."/>
            <person name="Iida K."/>
            <person name="Karnes M."/>
            <person name="Khan S."/>
            <person name="Koesema E."/>
            <person name="Ishida J."/>
            <person name="Jiang P.X."/>
            <person name="Jones T."/>
            <person name="Kawai J."/>
            <person name="Kamiya A."/>
            <person name="Meyers C."/>
            <person name="Nakajima M."/>
            <person name="Narusaka M."/>
            <person name="Seki M."/>
            <person name="Sakurai T."/>
            <person name="Satou M."/>
            <person name="Tamse R."/>
            <person name="Vaysberg M."/>
            <person name="Wallender E.K."/>
            <person name="Wong C."/>
            <person name="Yamamura Y."/>
            <person name="Yuan S."/>
            <person name="Shinozaki K."/>
            <person name="Davis R.W."/>
            <person name="Theologis A."/>
            <person name="Ecker J.R."/>
        </authorList>
    </citation>
    <scope>NUCLEOTIDE SEQUENCE [LARGE SCALE MRNA]</scope>
    <source>
        <strain>cv. Columbia</strain>
    </source>
</reference>
<reference key="5">
    <citation type="submission" date="2006-07" db="EMBL/GenBank/DDBJ databases">
        <title>Large-scale analysis of RIKEN Arabidopsis full-length (RAFL) cDNAs.</title>
        <authorList>
            <person name="Totoki Y."/>
            <person name="Seki M."/>
            <person name="Ishida J."/>
            <person name="Nakajima M."/>
            <person name="Enju A."/>
            <person name="Kamiya A."/>
            <person name="Narusaka M."/>
            <person name="Shin-i T."/>
            <person name="Nakagawa M."/>
            <person name="Sakamoto N."/>
            <person name="Oishi K."/>
            <person name="Kohara Y."/>
            <person name="Kobayashi M."/>
            <person name="Toyoda A."/>
            <person name="Sakaki Y."/>
            <person name="Sakurai T."/>
            <person name="Iida K."/>
            <person name="Akiyama K."/>
            <person name="Satou M."/>
            <person name="Toyoda T."/>
            <person name="Konagaya A."/>
            <person name="Carninci P."/>
            <person name="Kawai J."/>
            <person name="Hayashizaki Y."/>
            <person name="Shinozaki K."/>
        </authorList>
    </citation>
    <scope>NUCLEOTIDE SEQUENCE [LARGE SCALE MRNA]</scope>
    <source>
        <strain>cv. Columbia</strain>
    </source>
</reference>
<reference key="6">
    <citation type="journal article" date="2001" name="Plant J.">
        <title>The S-methylmethionine cycle in angiosperms: ubiquity, antiquity and activity.</title>
        <authorList>
            <person name="Ranocha P."/>
            <person name="McNeil S.D."/>
            <person name="Ziemak M.J."/>
            <person name="Li C."/>
            <person name="Tarczynski M.C."/>
            <person name="Hanson A.D."/>
        </authorList>
    </citation>
    <scope>PROBABLE FUNCTION OF SMM CYCLE</scope>
    <scope>BIOPHYSICOCHEMICAL PROPERTIES</scope>
    <scope>TISSUE SPECIFICITY</scope>
</reference>
<keyword id="KW-0025">Alternative splicing</keyword>
<keyword id="KW-0028">Amino-acid biosynthesis</keyword>
<keyword id="KW-0479">Metal-binding</keyword>
<keyword id="KW-0486">Methionine biosynthesis</keyword>
<keyword id="KW-0489">Methyltransferase</keyword>
<keyword id="KW-1185">Reference proteome</keyword>
<keyword id="KW-0949">S-adenosyl-L-methionine</keyword>
<keyword id="KW-0808">Transferase</keyword>
<keyword id="KW-0862">Zinc</keyword>
<sequence>MTGNSFNSMKDFLKQTGGYAVIDGGLATEFERHGADLNDPLWSAKCLVTSPHLIHTVHLDYLEAGADIISSASYQATIQGFEAKGFSREESESLLKKSVEIATEARNSYYDKCGTSSSMDDKILKKRPILVAASVGSYGAYLADGSEYSGIYGDSITLEKLKDFHRRRLQVLAESGADLIAFETIPNKIEAQAFADLLEEGDVKIPGWFSFNSKDGVNVVSGDSIKECISIAENCEKVVAVGINCTPPRFIEGLVLEIEKVTSKPILVYPNSGESYDADRKEWVENTGVGDEDFVSYVEKWMDAGVSLLGGCCRTTPTTIRAIHKRLVNRRSL</sequence>
<accession>Q9M1W4</accession>
<accession>Q0WTD0</accession>
<accession>Q9SDL6</accession>